<dbReference type="EMBL" id="EF672597">
    <property type="protein sequence ID" value="ABV53275.1"/>
    <property type="molecule type" value="Genomic_RNA"/>
</dbReference>
<dbReference type="Proteomes" id="UP000001459">
    <property type="component" value="Genome"/>
</dbReference>
<dbReference type="GO" id="GO:0033650">
    <property type="term" value="C:host cell mitochondrion"/>
    <property type="evidence" value="ECO:0007669"/>
    <property type="project" value="UniProtKB-SubCell"/>
</dbReference>
<dbReference type="HAMAP" id="MF_04093">
    <property type="entry name" value="ROTA_NSP6"/>
    <property type="match status" value="1"/>
</dbReference>
<dbReference type="InterPro" id="IPR006950">
    <property type="entry name" value="Rotavirus_NSP6"/>
</dbReference>
<dbReference type="Pfam" id="PF04866">
    <property type="entry name" value="Rota_NS6"/>
    <property type="match status" value="1"/>
</dbReference>
<organism>
    <name type="scientific">Rotavirus A (strain RVA/Human/Philippines/L26/1987/G12P1B[4])</name>
    <name type="common">RV-A</name>
    <dbReference type="NCBI Taxonomy" id="10953"/>
    <lineage>
        <taxon>Viruses</taxon>
        <taxon>Riboviria</taxon>
        <taxon>Orthornavirae</taxon>
        <taxon>Duplornaviricota</taxon>
        <taxon>Resentoviricetes</taxon>
        <taxon>Reovirales</taxon>
        <taxon>Sedoreoviridae</taxon>
        <taxon>Rotavirus</taxon>
        <taxon>Rotavirus A</taxon>
    </lineage>
</organism>
<reference key="1">
    <citation type="journal article" date="2008" name="J. Virol.">
        <title>Group A human rotavirus genomics: evidence that gene constellations are influenced by viral protein interactions.</title>
        <authorList>
            <person name="Heiman E.M."/>
            <person name="McDonald S.M."/>
            <person name="Barro M."/>
            <person name="Taraporewala Z.F."/>
            <person name="Bar-Magen T."/>
            <person name="Patton J.T."/>
        </authorList>
    </citation>
    <scope>NUCLEOTIDE SEQUENCE [GENOMIC RNA]</scope>
</reference>
<sequence length="92" mass="10997">MNRLLQRQLFLENLLVGVNSTFHQMQKHSINTCCRSLQRILDHLILLQTIHSPAFRLDRMQLRQMQTLACLWIHRRNHDLQATLDVINWISP</sequence>
<accession>B3SRV0</accession>
<feature type="chain" id="PRO_0000369520" description="Non-structural protein 6">
    <location>
        <begin position="1"/>
        <end position="92"/>
    </location>
</feature>
<keyword id="KW-1035">Host cytoplasm</keyword>
<keyword id="KW-1045">Host mitochondrion</keyword>
<organismHost>
    <name type="scientific">Homo sapiens</name>
    <name type="common">Human</name>
    <dbReference type="NCBI Taxonomy" id="9606"/>
</organismHost>
<protein>
    <recommendedName>
        <fullName evidence="1">Non-structural protein 6</fullName>
        <shortName evidence="1">NSP6</shortName>
    </recommendedName>
</protein>
<name>NSP6_ROTHL</name>
<proteinExistence type="inferred from homology"/>
<comment type="subunit">
    <text evidence="1">Interacts with NSP2 and NSP5.</text>
</comment>
<comment type="subcellular location">
    <subcellularLocation>
        <location evidence="1">Host cytoplasm</location>
    </subcellularLocation>
    <subcellularLocation>
        <location evidence="1">Host mitochondrion</location>
    </subcellularLocation>
    <text evidence="1">Found in spherical cytoplasmic structures, called viral factories, that appear early after infection and are the site of viral replication and packaging.</text>
</comment>
<comment type="similarity">
    <text evidence="1">Belongs to the rotavirus A NSP6 family.</text>
</comment>
<evidence type="ECO:0000255" key="1">
    <source>
        <dbReference type="HAMAP-Rule" id="MF_04093"/>
    </source>
</evidence>